<evidence type="ECO:0000255" key="1">
    <source>
        <dbReference type="HAMAP-Rule" id="MF_00711"/>
    </source>
</evidence>
<accession>Q0HEX2</accession>
<proteinExistence type="inferred from homology"/>
<protein>
    <recommendedName>
        <fullName evidence="1">Glycine dehydrogenase (decarboxylating)</fullName>
        <ecNumber evidence="1">1.4.4.2</ecNumber>
    </recommendedName>
    <alternativeName>
        <fullName evidence="1">Glycine cleavage system P-protein</fullName>
    </alternativeName>
    <alternativeName>
        <fullName evidence="1">Glycine decarboxylase</fullName>
    </alternativeName>
    <alternativeName>
        <fullName evidence="1">Glycine dehydrogenase (aminomethyl-transferring)</fullName>
    </alternativeName>
</protein>
<organism>
    <name type="scientific">Shewanella sp. (strain MR-4)</name>
    <dbReference type="NCBI Taxonomy" id="60480"/>
    <lineage>
        <taxon>Bacteria</taxon>
        <taxon>Pseudomonadati</taxon>
        <taxon>Pseudomonadota</taxon>
        <taxon>Gammaproteobacteria</taxon>
        <taxon>Alteromonadales</taxon>
        <taxon>Shewanellaceae</taxon>
        <taxon>Shewanella</taxon>
    </lineage>
</organism>
<gene>
    <name evidence="1" type="primary">gcvP</name>
    <name type="ordered locus">Shewmr4_3329</name>
</gene>
<sequence length="962" mass="104781">MTKQTLTQLEQHDLFLRRHIGPDSSQQQEMLNYVGAESLDDLTAQIVPESIRLSQELSIGDSCGEAEGIAYIRGLAKQNQVFKSYIGMGYYGTQVPNVILRNVFENPGWYTAYTPYQPEIAQGRLEAILNFQQVSMDLTGLDLASASLLDEATAAAEAMALAKRVSKAKKANIFFVADDVFPQTLDVVKTRAECFGFEVVVGPAHEAVNHELFGALFQYSNRFGQITDFTDLFAELRAKNVIVTVAADIMALVLLKSPGAMGADVVFGSAQRFGVPMGFGGPHAAFFVARDEHKRSMPGRIIGVSKDTRGNRALRMAMQTREQHIRREKANSNICTAQILLANMASFYAVFHGPQGLKTIASRINRFTDILAAGLQAKGVSLVNNTWFDTISIKGLDVAAVNARALAAEMNLRFDADGIVGVSLDETTLRTDIDALFDVILGAGHGLDVAALDAQIVAQGSQSIPEALVRQDAILTHPTFNRYQSETEMMRYIKRLESKDLALNYSMISLGSCTMKLNAAVEMLPVSWPEFANMHPFCPLDQAKGYTQLIEELSSWLVNVTGYDAVCIQPNSGAQGEYAGLLAIRKYHESRGQAHRNICLIPQSAHGTNPASAQLAGMQVVVTACDKQGNVDLEDLKAKAAEVAENLSCIMITYPSTHGVYEESIREICNIVHQHGGQVYLDGANMNAQVGLTSPGFIGADVSHLNLHKTFAIPHGGGGPGMGPIGVKAHLAPFVAGHVVVKPGRESDNNGAVSAAPYGSAGILPISWMYIKLLGSNGLKKSTQTALLNANYVMKKLSEHYPVLFRGRNDRVAHECIIDLRPIKEASGVTEMDIAKRLNDYGFHAPTMSFPVAGTLMIEPTESESKVELDRFIDAMVSIRAEIAKVEAGEWPADNNPLHNAPHTMADIMDSAFDSRPYSREVAVFPSAAVRTNKFWPTVNRIDDVYGDRNLFCACVPLSDYE</sequence>
<keyword id="KW-0560">Oxidoreductase</keyword>
<keyword id="KW-0663">Pyridoxal phosphate</keyword>
<feature type="chain" id="PRO_1000045613" description="Glycine dehydrogenase (decarboxylating)">
    <location>
        <begin position="1"/>
        <end position="962"/>
    </location>
</feature>
<feature type="modified residue" description="N6-(pyridoxal phosphate)lysine" evidence="1">
    <location>
        <position position="709"/>
    </location>
</feature>
<comment type="function">
    <text evidence="1">The glycine cleavage system catalyzes the degradation of glycine. The P protein binds the alpha-amino group of glycine through its pyridoxal phosphate cofactor; CO(2) is released and the remaining methylamine moiety is then transferred to the lipoamide cofactor of the H protein.</text>
</comment>
<comment type="catalytic activity">
    <reaction evidence="1">
        <text>N(6)-[(R)-lipoyl]-L-lysyl-[glycine-cleavage complex H protein] + glycine + H(+) = N(6)-[(R)-S(8)-aminomethyldihydrolipoyl]-L-lysyl-[glycine-cleavage complex H protein] + CO2</text>
        <dbReference type="Rhea" id="RHEA:24304"/>
        <dbReference type="Rhea" id="RHEA-COMP:10494"/>
        <dbReference type="Rhea" id="RHEA-COMP:10495"/>
        <dbReference type="ChEBI" id="CHEBI:15378"/>
        <dbReference type="ChEBI" id="CHEBI:16526"/>
        <dbReference type="ChEBI" id="CHEBI:57305"/>
        <dbReference type="ChEBI" id="CHEBI:83099"/>
        <dbReference type="ChEBI" id="CHEBI:83143"/>
        <dbReference type="EC" id="1.4.4.2"/>
    </reaction>
</comment>
<comment type="cofactor">
    <cofactor evidence="1">
        <name>pyridoxal 5'-phosphate</name>
        <dbReference type="ChEBI" id="CHEBI:597326"/>
    </cofactor>
</comment>
<comment type="subunit">
    <text evidence="1">The glycine cleavage system is composed of four proteins: P, T, L and H.</text>
</comment>
<comment type="similarity">
    <text evidence="1">Belongs to the GcvP family.</text>
</comment>
<reference key="1">
    <citation type="submission" date="2006-08" db="EMBL/GenBank/DDBJ databases">
        <title>Complete sequence of Shewanella sp. MR-4.</title>
        <authorList>
            <consortium name="US DOE Joint Genome Institute"/>
            <person name="Copeland A."/>
            <person name="Lucas S."/>
            <person name="Lapidus A."/>
            <person name="Barry K."/>
            <person name="Detter J.C."/>
            <person name="Glavina del Rio T."/>
            <person name="Hammon N."/>
            <person name="Israni S."/>
            <person name="Dalin E."/>
            <person name="Tice H."/>
            <person name="Pitluck S."/>
            <person name="Kiss H."/>
            <person name="Brettin T."/>
            <person name="Bruce D."/>
            <person name="Han C."/>
            <person name="Tapia R."/>
            <person name="Gilna P."/>
            <person name="Schmutz J."/>
            <person name="Larimer F."/>
            <person name="Land M."/>
            <person name="Hauser L."/>
            <person name="Kyrpides N."/>
            <person name="Mikhailova N."/>
            <person name="Nealson K."/>
            <person name="Konstantinidis K."/>
            <person name="Klappenbach J."/>
            <person name="Tiedje J."/>
            <person name="Richardson P."/>
        </authorList>
    </citation>
    <scope>NUCLEOTIDE SEQUENCE [LARGE SCALE GENOMIC DNA]</scope>
    <source>
        <strain>MR-4</strain>
    </source>
</reference>
<dbReference type="EC" id="1.4.4.2" evidence="1"/>
<dbReference type="EMBL" id="CP000446">
    <property type="protein sequence ID" value="ABI40395.1"/>
    <property type="molecule type" value="Genomic_DNA"/>
</dbReference>
<dbReference type="RefSeq" id="WP_011624063.1">
    <property type="nucleotide sequence ID" value="NC_008321.1"/>
</dbReference>
<dbReference type="SMR" id="Q0HEX2"/>
<dbReference type="KEGG" id="she:Shewmr4_3329"/>
<dbReference type="HOGENOM" id="CLU_004620_1_1_6"/>
<dbReference type="GO" id="GO:0005829">
    <property type="term" value="C:cytosol"/>
    <property type="evidence" value="ECO:0007669"/>
    <property type="project" value="TreeGrafter"/>
</dbReference>
<dbReference type="GO" id="GO:0005960">
    <property type="term" value="C:glycine cleavage complex"/>
    <property type="evidence" value="ECO:0007669"/>
    <property type="project" value="TreeGrafter"/>
</dbReference>
<dbReference type="GO" id="GO:0016594">
    <property type="term" value="F:glycine binding"/>
    <property type="evidence" value="ECO:0007669"/>
    <property type="project" value="TreeGrafter"/>
</dbReference>
<dbReference type="GO" id="GO:0004375">
    <property type="term" value="F:glycine dehydrogenase (decarboxylating) activity"/>
    <property type="evidence" value="ECO:0007669"/>
    <property type="project" value="UniProtKB-EC"/>
</dbReference>
<dbReference type="GO" id="GO:0030170">
    <property type="term" value="F:pyridoxal phosphate binding"/>
    <property type="evidence" value="ECO:0007669"/>
    <property type="project" value="TreeGrafter"/>
</dbReference>
<dbReference type="GO" id="GO:0019464">
    <property type="term" value="P:glycine decarboxylation via glycine cleavage system"/>
    <property type="evidence" value="ECO:0007669"/>
    <property type="project" value="UniProtKB-UniRule"/>
</dbReference>
<dbReference type="CDD" id="cd00613">
    <property type="entry name" value="GDC-P"/>
    <property type="match status" value="2"/>
</dbReference>
<dbReference type="FunFam" id="3.40.640.10:FF:000005">
    <property type="entry name" value="Glycine dehydrogenase (decarboxylating), mitochondrial"/>
    <property type="match status" value="1"/>
</dbReference>
<dbReference type="FunFam" id="3.90.1150.10:FF:000007">
    <property type="entry name" value="Glycine dehydrogenase (decarboxylating), mitochondrial"/>
    <property type="match status" value="1"/>
</dbReference>
<dbReference type="FunFam" id="3.40.640.10:FF:000007">
    <property type="entry name" value="glycine dehydrogenase (Decarboxylating), mitochondrial"/>
    <property type="match status" value="1"/>
</dbReference>
<dbReference type="Gene3D" id="3.90.1150.10">
    <property type="entry name" value="Aspartate Aminotransferase, domain 1"/>
    <property type="match status" value="1"/>
</dbReference>
<dbReference type="Gene3D" id="3.40.640.10">
    <property type="entry name" value="Type I PLP-dependent aspartate aminotransferase-like (Major domain)"/>
    <property type="match status" value="2"/>
</dbReference>
<dbReference type="HAMAP" id="MF_00711">
    <property type="entry name" value="GcvP"/>
    <property type="match status" value="1"/>
</dbReference>
<dbReference type="InterPro" id="IPR003437">
    <property type="entry name" value="GcvP"/>
</dbReference>
<dbReference type="InterPro" id="IPR049316">
    <property type="entry name" value="GDC-P_C"/>
</dbReference>
<dbReference type="InterPro" id="IPR049315">
    <property type="entry name" value="GDC-P_N"/>
</dbReference>
<dbReference type="InterPro" id="IPR020581">
    <property type="entry name" value="GDC_P"/>
</dbReference>
<dbReference type="InterPro" id="IPR015424">
    <property type="entry name" value="PyrdxlP-dep_Trfase"/>
</dbReference>
<dbReference type="InterPro" id="IPR015421">
    <property type="entry name" value="PyrdxlP-dep_Trfase_major"/>
</dbReference>
<dbReference type="InterPro" id="IPR015422">
    <property type="entry name" value="PyrdxlP-dep_Trfase_small"/>
</dbReference>
<dbReference type="NCBIfam" id="TIGR00461">
    <property type="entry name" value="gcvP"/>
    <property type="match status" value="1"/>
</dbReference>
<dbReference type="NCBIfam" id="NF003346">
    <property type="entry name" value="PRK04366.1"/>
    <property type="match status" value="1"/>
</dbReference>
<dbReference type="PANTHER" id="PTHR11773:SF13">
    <property type="entry name" value="GLYCINE DEHYDROGENASE (DECARBOXYLATING)"/>
    <property type="match status" value="1"/>
</dbReference>
<dbReference type="PANTHER" id="PTHR11773">
    <property type="entry name" value="GLYCINE DEHYDROGENASE, DECARBOXYLATING"/>
    <property type="match status" value="1"/>
</dbReference>
<dbReference type="Pfam" id="PF21478">
    <property type="entry name" value="GcvP2_C"/>
    <property type="match status" value="1"/>
</dbReference>
<dbReference type="Pfam" id="PF02347">
    <property type="entry name" value="GDC-P"/>
    <property type="match status" value="2"/>
</dbReference>
<dbReference type="SUPFAM" id="SSF53383">
    <property type="entry name" value="PLP-dependent transferases"/>
    <property type="match status" value="2"/>
</dbReference>
<name>GCSP_SHESM</name>